<reference key="1">
    <citation type="journal article" date="1991" name="J. Biol. Chem.">
        <title>Molecular cloning and sequence analysis of cDNAs coding for guinea pig alpha 1-antiproteinases S and F and contrapsin.</title>
        <authorList>
            <person name="Suzuki Y."/>
            <person name="Yoshida K."/>
            <person name="Honda E."/>
            <person name="Sinohara H."/>
        </authorList>
    </citation>
    <scope>NUCLEOTIDE SEQUENCE [MRNA]</scope>
    <scope>PROTEIN SEQUENCE OF 25-44 AND 75-93</scope>
</reference>
<feature type="signal peptide" evidence="3">
    <location>
        <begin position="1"/>
        <end position="24"/>
    </location>
</feature>
<feature type="chain" id="PRO_0000032382" description="Alpha-1-antiproteinase S">
    <location>
        <begin position="25"/>
        <end position="405"/>
    </location>
</feature>
<feature type="region of interest" description="RCL">
    <location>
        <begin position="360"/>
        <end position="379"/>
    </location>
</feature>
<feature type="site" description="Reactive bond">
    <location>
        <begin position="369"/>
        <end position="370"/>
    </location>
</feature>
<feature type="glycosylation site" description="N-linked (GlcNAc...) asparagine" evidence="2">
    <location>
        <position position="57"/>
    </location>
</feature>
<feature type="glycosylation site" description="N-linked (GlcNAc...) asparagine" evidence="2">
    <location>
        <position position="94"/>
    </location>
</feature>
<feature type="glycosylation site" description="N-linked (GlcNAc...) asparagine" evidence="2">
    <location>
        <position position="157"/>
    </location>
</feature>
<feature type="glycosylation site" description="N-linked (GlcNAc...) asparagine" evidence="2">
    <location>
        <position position="258"/>
    </location>
</feature>
<comment type="function">
    <text>Inhibits elastase, chymotrypsin, cathepsin G, plasmin, and trypsin.</text>
</comment>
<comment type="subcellular location">
    <subcellularLocation>
        <location>Secreted</location>
    </subcellularLocation>
</comment>
<comment type="induction">
    <text>APS rose several hundred-fold during the acute phase reaction.</text>
</comment>
<comment type="domain">
    <text evidence="1">The reactive center loop (RCL) extends out from the body of the protein and directs binding to the target protease. The protease cleaves the serpin at the reactive site within the RCL, establishing a covalent linkage between the carboxyl group of the serpin reactive site and the serine hydroxyl of the protease. The resulting inactive serpin-protease complex is highly stable (By similarity).</text>
</comment>
<comment type="similarity">
    <text evidence="4">Belongs to the serpin family.</text>
</comment>
<protein>
    <recommendedName>
        <fullName>Alpha-1-antiproteinase S</fullName>
        <shortName>APS</shortName>
    </recommendedName>
    <alternativeName>
        <fullName>Alpha-1-antitrypsin</fullName>
    </alternativeName>
    <alternativeName>
        <fullName>Alpha-1-proteinase inhibitor</fullName>
    </alternativeName>
</protein>
<name>A1AS_CAVPO</name>
<sequence length="405" mass="45125">MPSAIPRGLLLLAGLCCLVFGIMAEDAQVAQGPSQQIPRSLAHFAHSMYRVLTQQSNTSNIFFSPVSIATALAMVSVGAKGDTHTQILRGLEFNLTEIAEADIHNGFQNLLHTLNRPHSEHQLTTGNGLFLDQKLKLKEKFSEDVKTLYHAEAFPTNFSNPKEAEKQINAYVEKGTQGKIVDLVKDLSADTVLALVNYIFFRGKWEKPFDVKHTTQEDFHVDTSTTVKVPMMKREGKYKAFHCSTIQSWVLLLDYEGNVTALFLLPEEGKMQHLEETLTPELIFKFARKTERMFANVHLPKLSISGTYDLKEVLGHLGITNVFSDAADLSGVTEDIPLKISKGLHKALLTIDEKGTEAAGATMMEFMPMSLPEDLSFNKPFLFLIIDHSTDTPLFVGKVMDPTKK</sequence>
<organism>
    <name type="scientific">Cavia porcellus</name>
    <name type="common">Guinea pig</name>
    <dbReference type="NCBI Taxonomy" id="10141"/>
    <lineage>
        <taxon>Eukaryota</taxon>
        <taxon>Metazoa</taxon>
        <taxon>Chordata</taxon>
        <taxon>Craniata</taxon>
        <taxon>Vertebrata</taxon>
        <taxon>Euteleostomi</taxon>
        <taxon>Mammalia</taxon>
        <taxon>Eutheria</taxon>
        <taxon>Euarchontoglires</taxon>
        <taxon>Glires</taxon>
        <taxon>Rodentia</taxon>
        <taxon>Hystricomorpha</taxon>
        <taxon>Caviidae</taxon>
        <taxon>Cavia</taxon>
    </lineage>
</organism>
<keyword id="KW-0011">Acute phase</keyword>
<keyword id="KW-0903">Direct protein sequencing</keyword>
<keyword id="KW-0325">Glycoprotein</keyword>
<keyword id="KW-0646">Protease inhibitor</keyword>
<keyword id="KW-1185">Reference proteome</keyword>
<keyword id="KW-0964">Secreted</keyword>
<keyword id="KW-0722">Serine protease inhibitor</keyword>
<keyword id="KW-0732">Signal</keyword>
<dbReference type="EMBL" id="M57270">
    <property type="protein sequence ID" value="AAA62805.1"/>
    <property type="molecule type" value="mRNA"/>
</dbReference>
<dbReference type="PIR" id="A39088">
    <property type="entry name" value="A39088"/>
</dbReference>
<dbReference type="RefSeq" id="NP_001166205.1">
    <property type="nucleotide sequence ID" value="NM_001172734.1"/>
</dbReference>
<dbReference type="SMR" id="P22325"/>
<dbReference type="FunCoup" id="P22325">
    <property type="interactions" value="390"/>
</dbReference>
<dbReference type="STRING" id="10141.ENSCPOP00000011412"/>
<dbReference type="MEROPS" id="I04.001"/>
<dbReference type="Ensembl" id="ENSCPOT00000012808.3">
    <property type="protein sequence ID" value="ENSCPOP00000011412.2"/>
    <property type="gene ID" value="ENSCPOG00000012686.4"/>
</dbReference>
<dbReference type="GeneID" id="100379265"/>
<dbReference type="KEGG" id="cpoc:100379265"/>
<dbReference type="VEuPathDB" id="HostDB:ENSCPOG00000012686"/>
<dbReference type="eggNOG" id="KOG2392">
    <property type="taxonomic scope" value="Eukaryota"/>
</dbReference>
<dbReference type="GeneTree" id="ENSGT00940000154493"/>
<dbReference type="HOGENOM" id="CLU_023330_2_1_1"/>
<dbReference type="InParanoid" id="P22325"/>
<dbReference type="OMA" id="MEIMPMS"/>
<dbReference type="OrthoDB" id="671595at2759"/>
<dbReference type="TreeFam" id="TF343201"/>
<dbReference type="Proteomes" id="UP000005447">
    <property type="component" value="Unassembled WGS sequence"/>
</dbReference>
<dbReference type="Bgee" id="ENSCPOG00000012686">
    <property type="expression patterns" value="Expressed in liver and 4 other cell types or tissues"/>
</dbReference>
<dbReference type="GO" id="GO:0005615">
    <property type="term" value="C:extracellular space"/>
    <property type="evidence" value="ECO:0007669"/>
    <property type="project" value="InterPro"/>
</dbReference>
<dbReference type="GO" id="GO:0004867">
    <property type="term" value="F:serine-type endopeptidase inhibitor activity"/>
    <property type="evidence" value="ECO:0007669"/>
    <property type="project" value="UniProtKB-KW"/>
</dbReference>
<dbReference type="GO" id="GO:0006953">
    <property type="term" value="P:acute-phase response"/>
    <property type="evidence" value="ECO:0007669"/>
    <property type="project" value="UniProtKB-KW"/>
</dbReference>
<dbReference type="CDD" id="cd02056">
    <property type="entry name" value="serpinA1_A1AT"/>
    <property type="match status" value="1"/>
</dbReference>
<dbReference type="FunFam" id="2.30.39.10:FF:000003">
    <property type="entry name" value="alpha-1-antitrypsin isoform X1"/>
    <property type="match status" value="1"/>
</dbReference>
<dbReference type="FunFam" id="3.30.497.10:FF:000001">
    <property type="entry name" value="Serine protease inhibitor"/>
    <property type="match status" value="1"/>
</dbReference>
<dbReference type="FunFam" id="2.10.310.10:FF:000001">
    <property type="entry name" value="Serpin family A member 1"/>
    <property type="match status" value="1"/>
</dbReference>
<dbReference type="Gene3D" id="2.30.39.10">
    <property type="entry name" value="Alpha-1-antitrypsin, domain 1"/>
    <property type="match status" value="1"/>
</dbReference>
<dbReference type="Gene3D" id="3.30.497.10">
    <property type="entry name" value="Antithrombin, subunit I, domain 2"/>
    <property type="match status" value="1"/>
</dbReference>
<dbReference type="Gene3D" id="2.10.310.10">
    <property type="entry name" value="Serpins superfamily"/>
    <property type="match status" value="1"/>
</dbReference>
<dbReference type="InterPro" id="IPR023795">
    <property type="entry name" value="Serpin_CS"/>
</dbReference>
<dbReference type="InterPro" id="IPR023796">
    <property type="entry name" value="Serpin_dom"/>
</dbReference>
<dbReference type="InterPro" id="IPR000215">
    <property type="entry name" value="Serpin_fam"/>
</dbReference>
<dbReference type="InterPro" id="IPR036186">
    <property type="entry name" value="Serpin_sf"/>
</dbReference>
<dbReference type="InterPro" id="IPR042178">
    <property type="entry name" value="Serpin_sf_1"/>
</dbReference>
<dbReference type="InterPro" id="IPR042185">
    <property type="entry name" value="Serpin_sf_2"/>
</dbReference>
<dbReference type="PANTHER" id="PTHR11461:SF165">
    <property type="entry name" value="ALPHA-1-ANTITRYPSIN"/>
    <property type="match status" value="1"/>
</dbReference>
<dbReference type="PANTHER" id="PTHR11461">
    <property type="entry name" value="SERINE PROTEASE INHIBITOR, SERPIN"/>
    <property type="match status" value="1"/>
</dbReference>
<dbReference type="Pfam" id="PF00079">
    <property type="entry name" value="Serpin"/>
    <property type="match status" value="1"/>
</dbReference>
<dbReference type="SMART" id="SM00093">
    <property type="entry name" value="SERPIN"/>
    <property type="match status" value="1"/>
</dbReference>
<dbReference type="SUPFAM" id="SSF56574">
    <property type="entry name" value="Serpins"/>
    <property type="match status" value="1"/>
</dbReference>
<dbReference type="PROSITE" id="PS00284">
    <property type="entry name" value="SERPIN"/>
    <property type="match status" value="1"/>
</dbReference>
<accession>P22325</accession>
<evidence type="ECO:0000250" key="1"/>
<evidence type="ECO:0000255" key="2"/>
<evidence type="ECO:0000269" key="3">
    <source>
    </source>
</evidence>
<evidence type="ECO:0000305" key="4"/>
<proteinExistence type="evidence at protein level"/>